<sequence length="696" mass="79969">MKAPIPHLILLYATFTQSLKVVTKRGSADGCTDWSIDIKKYQVLVGEPVRIKCALFYGYIRTNYSLAQSAGLSLMWYKSSGPGDFEEPIAFDGSRMSKEEDSIWFRPTLLQDSGLYACVIRNSTYCMKVSISLTVGENDTGLCYNSKMKYFEKAELSKSKEISCRDIEDFLLPTREPEILWYKECRTKTWRPSIVFKRDTLLIREVREDDIGNYTCELKYGGFVVRRTTELTVTAPLTDKPPKLLYPMESKLTIQETQLGDSANLTCRAFFGYSGDVSPLIYWMKGEKFIEDLDENRVWESDIRILKEHLGEQEVSISLIVDSVEEGDLGNYSCYVENGNGRRHASVLLHKRELMYTVELAGGLGAILLLLVCLVTIYKCYKIEIMLFYRNHFGAEELDGDNKDYDAYLSYTKVDPDQWNQETGEEERFALEILPDMLEKHYGYKLFIPDRDLIPTGTYIEDVARCVDQSKRLIIVMTPNYVVRRGWSIFELETRLRNMLVTGEIKVILIECSELRGIMNYQEVEALKHTIKLLTVIKWHGPKCNKLNSKFWKRLQYEMPFKRIEPITHEQALDVSEQGPFGELQTVSAISMAAATSTALATAHPDLRSTFHNTYHSQMRQKHYYRSYEYDVPPTGTLPLTSIGNQHTYCNIPMTLINGQRPQTKSSREQNPDEAHTNSAILPLLPRETSISSVIW</sequence>
<gene>
    <name type="primary">IL1RAPL1</name>
    <name type="synonym">OPHN4</name>
</gene>
<comment type="function">
    <text evidence="2 3 4">May regulate secretion and presynaptic differentiation through inhibition of the activity of N-type voltage-gated calcium channel. May activate the MAP kinase JNK (By similarity). Plays a role in neurite outgrowth (By similarity). During dendritic spine formation can bidirectionally induce pre- and post-synaptic differentiation of neurons by trans-synaptically binding to PTPRD (By similarity).</text>
</comment>
<comment type="catalytic activity">
    <reaction evidence="7">
        <text>NAD(+) + H2O = ADP-D-ribose + nicotinamide + H(+)</text>
        <dbReference type="Rhea" id="RHEA:16301"/>
        <dbReference type="ChEBI" id="CHEBI:15377"/>
        <dbReference type="ChEBI" id="CHEBI:15378"/>
        <dbReference type="ChEBI" id="CHEBI:17154"/>
        <dbReference type="ChEBI" id="CHEBI:57540"/>
        <dbReference type="ChEBI" id="CHEBI:57967"/>
        <dbReference type="EC" id="3.2.2.6"/>
    </reaction>
    <physiologicalReaction direction="left-to-right" evidence="7">
        <dbReference type="Rhea" id="RHEA:16302"/>
    </physiologicalReaction>
</comment>
<comment type="subunit">
    <text evidence="2 4">Homodimer (By similarity). Interacts (calcium-independent) with NCS1/FREQ (By similarity). Interacts (via the first immunoglobilin domain) with PTPRD (via the second immunoglobilin domain); this interaction is PTPRD-splicing-dependent and induces pre- and post-synaptic differentiation of neurons and is required for IL1RAPL1-mediated synapse formation (By similarity).</text>
</comment>
<comment type="subcellular location">
    <subcellularLocation>
        <location evidence="1">Cell membrane</location>
        <topology evidence="1">Single-pass type I membrane protein</topology>
    </subcellularLocation>
    <subcellularLocation>
        <location evidence="1">Cytoplasm</location>
    </subcellularLocation>
    <subcellularLocation>
        <location evidence="1">Cell projection</location>
        <location evidence="1">Axon</location>
    </subcellularLocation>
    <subcellularLocation>
        <location evidence="1">Cell projection</location>
        <location evidence="1">Dendrite</location>
    </subcellularLocation>
    <text evidence="1">May localize to the cell body and growth cones of dendrite-like processes.</text>
</comment>
<comment type="domain">
    <text evidence="7">The TIR domain mediates NAD(+) hydrolase (NADase) activity. Self-association of TIR domains is required for NADase activity.</text>
</comment>
<comment type="similarity">
    <text evidence="9">Belongs to the interleukin-1 receptor family.</text>
</comment>
<proteinExistence type="evidence at transcript level"/>
<dbReference type="EC" id="3.2.2.6" evidence="7"/>
<dbReference type="EMBL" id="AB102651">
    <property type="protein sequence ID" value="BAC81120.1"/>
    <property type="molecule type" value="mRNA"/>
</dbReference>
<dbReference type="RefSeq" id="NP_001009038.1">
    <property type="nucleotide sequence ID" value="NM_001009038.1"/>
</dbReference>
<dbReference type="RefSeq" id="XP_009437156.1">
    <property type="nucleotide sequence ID" value="XM_009438881.5"/>
</dbReference>
<dbReference type="SMR" id="P60029"/>
<dbReference type="FunCoup" id="P60029">
    <property type="interactions" value="23"/>
</dbReference>
<dbReference type="STRING" id="9598.ENSPTRP00000037316"/>
<dbReference type="GlyCosmos" id="P60029">
    <property type="glycosylation" value="6 sites, No reported glycans"/>
</dbReference>
<dbReference type="PaxDb" id="9598-ENSPTRP00000037316"/>
<dbReference type="Ensembl" id="ENSPTRT00000040384.4">
    <property type="protein sequence ID" value="ENSPTRP00000037316.4"/>
    <property type="gene ID" value="ENSPTRG00000021762.4"/>
</dbReference>
<dbReference type="GeneID" id="450116"/>
<dbReference type="KEGG" id="ptr:450116"/>
<dbReference type="CTD" id="11141"/>
<dbReference type="VGNC" id="VGNC:55718">
    <property type="gene designation" value="IL1RAPL1"/>
</dbReference>
<dbReference type="eggNOG" id="KOG3971">
    <property type="taxonomic scope" value="Eukaryota"/>
</dbReference>
<dbReference type="GeneTree" id="ENSGT01090000260076"/>
<dbReference type="InParanoid" id="P60029"/>
<dbReference type="OMA" id="WRSSIVF"/>
<dbReference type="OrthoDB" id="2269at9604"/>
<dbReference type="Proteomes" id="UP000002277">
    <property type="component" value="Chromosome X"/>
</dbReference>
<dbReference type="Bgee" id="ENSPTRG00000021762">
    <property type="expression patterns" value="Expressed in temporal lobe and 9 other cell types or tissues"/>
</dbReference>
<dbReference type="GO" id="GO:0030424">
    <property type="term" value="C:axon"/>
    <property type="evidence" value="ECO:0007669"/>
    <property type="project" value="UniProtKB-SubCell"/>
</dbReference>
<dbReference type="GO" id="GO:0009986">
    <property type="term" value="C:cell surface"/>
    <property type="evidence" value="ECO:0000318"/>
    <property type="project" value="GO_Central"/>
</dbReference>
<dbReference type="GO" id="GO:0005737">
    <property type="term" value="C:cytoplasm"/>
    <property type="evidence" value="ECO:0007669"/>
    <property type="project" value="UniProtKB-SubCell"/>
</dbReference>
<dbReference type="GO" id="GO:0030425">
    <property type="term" value="C:dendrite"/>
    <property type="evidence" value="ECO:0007669"/>
    <property type="project" value="UniProtKB-SubCell"/>
</dbReference>
<dbReference type="GO" id="GO:0098978">
    <property type="term" value="C:glutamatergic synapse"/>
    <property type="evidence" value="ECO:0007669"/>
    <property type="project" value="Ensembl"/>
</dbReference>
<dbReference type="GO" id="GO:0005886">
    <property type="term" value="C:plasma membrane"/>
    <property type="evidence" value="ECO:0000250"/>
    <property type="project" value="UniProtKB"/>
</dbReference>
<dbReference type="GO" id="GO:0061809">
    <property type="term" value="F:NAD+ nucleosidase activity, cyclic ADP-ribose generating"/>
    <property type="evidence" value="ECO:0007669"/>
    <property type="project" value="UniProtKB-EC"/>
</dbReference>
<dbReference type="GO" id="GO:0007166">
    <property type="term" value="P:cell surface receptor signaling pathway"/>
    <property type="evidence" value="ECO:0000318"/>
    <property type="project" value="GO_Central"/>
</dbReference>
<dbReference type="GO" id="GO:0045920">
    <property type="term" value="P:negative regulation of exocytosis"/>
    <property type="evidence" value="ECO:0000250"/>
    <property type="project" value="UniProtKB"/>
</dbReference>
<dbReference type="GO" id="GO:0051965">
    <property type="term" value="P:positive regulation of synapse assembly"/>
    <property type="evidence" value="ECO:0000250"/>
    <property type="project" value="UniProtKB"/>
</dbReference>
<dbReference type="GO" id="GO:0010975">
    <property type="term" value="P:regulation of neuron projection development"/>
    <property type="evidence" value="ECO:0000250"/>
    <property type="project" value="UniProtKB"/>
</dbReference>
<dbReference type="GO" id="GO:0099175">
    <property type="term" value="P:regulation of postsynapse organization"/>
    <property type="evidence" value="ECO:0007669"/>
    <property type="project" value="Ensembl"/>
</dbReference>
<dbReference type="GO" id="GO:1905606">
    <property type="term" value="P:regulation of presynapse assembly"/>
    <property type="evidence" value="ECO:0007669"/>
    <property type="project" value="Ensembl"/>
</dbReference>
<dbReference type="GO" id="GO:0099545">
    <property type="term" value="P:trans-synaptic signaling by trans-synaptic complex"/>
    <property type="evidence" value="ECO:0007669"/>
    <property type="project" value="Ensembl"/>
</dbReference>
<dbReference type="CDD" id="cd00096">
    <property type="entry name" value="Ig"/>
    <property type="match status" value="1"/>
</dbReference>
<dbReference type="CDD" id="cd05896">
    <property type="entry name" value="Ig1_IL1RAPL-1_like"/>
    <property type="match status" value="1"/>
</dbReference>
<dbReference type="FunFam" id="2.60.40.10:FF:000188">
    <property type="entry name" value="Interleukin-1 receptor accessory protein-like 1"/>
    <property type="match status" value="1"/>
</dbReference>
<dbReference type="FunFam" id="2.60.40.10:FF:001486">
    <property type="entry name" value="Interleukin-1 receptor accessory protein-like 1"/>
    <property type="match status" value="1"/>
</dbReference>
<dbReference type="FunFam" id="2.60.40.10:FF:000220">
    <property type="entry name" value="X-linked interleukin-1 receptor accessory protein-like 1"/>
    <property type="match status" value="1"/>
</dbReference>
<dbReference type="FunFam" id="3.40.50.10140:FF:000004">
    <property type="entry name" value="X-linked interleukin-1 receptor accessory protein-like 1"/>
    <property type="match status" value="1"/>
</dbReference>
<dbReference type="Gene3D" id="2.60.40.10">
    <property type="entry name" value="Immunoglobulins"/>
    <property type="match status" value="3"/>
</dbReference>
<dbReference type="Gene3D" id="3.40.50.10140">
    <property type="entry name" value="Toll/interleukin-1 receptor homology (TIR) domain"/>
    <property type="match status" value="1"/>
</dbReference>
<dbReference type="InterPro" id="IPR007110">
    <property type="entry name" value="Ig-like_dom"/>
</dbReference>
<dbReference type="InterPro" id="IPR036179">
    <property type="entry name" value="Ig-like_dom_sf"/>
</dbReference>
<dbReference type="InterPro" id="IPR013783">
    <property type="entry name" value="Ig-like_fold"/>
</dbReference>
<dbReference type="InterPro" id="IPR003599">
    <property type="entry name" value="Ig_sub"/>
</dbReference>
<dbReference type="InterPro" id="IPR003598">
    <property type="entry name" value="Ig_sub2"/>
</dbReference>
<dbReference type="InterPro" id="IPR015621">
    <property type="entry name" value="IL-1_rcpt_fam"/>
</dbReference>
<dbReference type="InterPro" id="IPR041416">
    <property type="entry name" value="IL-1RAcP-like_ig"/>
</dbReference>
<dbReference type="InterPro" id="IPR013151">
    <property type="entry name" value="Immunoglobulin_dom"/>
</dbReference>
<dbReference type="InterPro" id="IPR000157">
    <property type="entry name" value="TIR_dom"/>
</dbReference>
<dbReference type="InterPro" id="IPR035897">
    <property type="entry name" value="Toll_tir_struct_dom_sf"/>
</dbReference>
<dbReference type="PANTHER" id="PTHR11890:SF22">
    <property type="entry name" value="INTERLEUKIN-1 RECEPTOR ACCESSORY PROTEIN-LIKE 1"/>
    <property type="match status" value="1"/>
</dbReference>
<dbReference type="PANTHER" id="PTHR11890">
    <property type="entry name" value="INTERLEUKIN-1 RECEPTOR FAMILY MEMBER"/>
    <property type="match status" value="1"/>
</dbReference>
<dbReference type="Pfam" id="PF00047">
    <property type="entry name" value="ig"/>
    <property type="match status" value="1"/>
</dbReference>
<dbReference type="Pfam" id="PF18452">
    <property type="entry name" value="Ig_6"/>
    <property type="match status" value="1"/>
</dbReference>
<dbReference type="Pfam" id="PF01582">
    <property type="entry name" value="TIR"/>
    <property type="match status" value="1"/>
</dbReference>
<dbReference type="PRINTS" id="PR01537">
    <property type="entry name" value="INTRLKN1R1F"/>
</dbReference>
<dbReference type="SMART" id="SM00409">
    <property type="entry name" value="IG"/>
    <property type="match status" value="3"/>
</dbReference>
<dbReference type="SMART" id="SM00408">
    <property type="entry name" value="IGc2"/>
    <property type="match status" value="2"/>
</dbReference>
<dbReference type="SMART" id="SM00255">
    <property type="entry name" value="TIR"/>
    <property type="match status" value="1"/>
</dbReference>
<dbReference type="SUPFAM" id="SSF48726">
    <property type="entry name" value="Immunoglobulin"/>
    <property type="match status" value="3"/>
</dbReference>
<dbReference type="SUPFAM" id="SSF52200">
    <property type="entry name" value="Toll/Interleukin receptor TIR domain"/>
    <property type="match status" value="1"/>
</dbReference>
<dbReference type="PROSITE" id="PS50835">
    <property type="entry name" value="IG_LIKE"/>
    <property type="match status" value="3"/>
</dbReference>
<dbReference type="PROSITE" id="PS50104">
    <property type="entry name" value="TIR"/>
    <property type="match status" value="1"/>
</dbReference>
<name>IRPL1_PANTR</name>
<feature type="signal peptide" evidence="5">
    <location>
        <begin position="1"/>
        <end position="18"/>
    </location>
</feature>
<feature type="chain" id="PRO_0000015456" description="Interleukin-1 receptor accessory protein-like 1">
    <location>
        <begin position="19"/>
        <end position="696"/>
    </location>
</feature>
<feature type="topological domain" description="Extracellular" evidence="5">
    <location>
        <begin position="19"/>
        <end position="357"/>
    </location>
</feature>
<feature type="transmembrane region" description="Helical" evidence="5">
    <location>
        <begin position="358"/>
        <end position="378"/>
    </location>
</feature>
<feature type="topological domain" description="Cytoplasmic" evidence="5">
    <location>
        <begin position="379"/>
        <end position="696"/>
    </location>
</feature>
<feature type="domain" description="Ig-like C2-type 1">
    <location>
        <begin position="19"/>
        <end position="134"/>
    </location>
</feature>
<feature type="domain" description="Ig-like C2-type 2">
    <location>
        <begin position="143"/>
        <end position="232"/>
    </location>
</feature>
<feature type="domain" description="Ig-like C2-type 3">
    <location>
        <begin position="242"/>
        <end position="350"/>
    </location>
</feature>
<feature type="domain" description="TIR" evidence="7">
    <location>
        <begin position="403"/>
        <end position="559"/>
    </location>
</feature>
<feature type="region of interest" description="Interaction with NCS1" evidence="1">
    <location>
        <begin position="549"/>
        <end position="644"/>
    </location>
</feature>
<feature type="region of interest" description="Disordered" evidence="8">
    <location>
        <begin position="659"/>
        <end position="680"/>
    </location>
</feature>
<feature type="compositionally biased region" description="Basic and acidic residues" evidence="8">
    <location>
        <begin position="666"/>
        <end position="676"/>
    </location>
</feature>
<feature type="active site" evidence="7">
    <location>
        <position position="491"/>
    </location>
</feature>
<feature type="site" description="Essential for interaction with PTPRD" evidence="2">
    <location>
        <position position="34"/>
    </location>
</feature>
<feature type="glycosylation site" description="N-linked (GlcNAc...) asparagine" evidence="5">
    <location>
        <position position="63"/>
    </location>
</feature>
<feature type="glycosylation site" description="N-linked (GlcNAc...) asparagine" evidence="5">
    <location>
        <position position="122"/>
    </location>
</feature>
<feature type="glycosylation site" description="N-linked (GlcNAc...) asparagine" evidence="5">
    <location>
        <position position="138"/>
    </location>
</feature>
<feature type="glycosylation site" description="N-linked (GlcNAc...) asparagine" evidence="5">
    <location>
        <position position="213"/>
    </location>
</feature>
<feature type="glycosylation site" description="N-linked (GlcNAc...) asparagine" evidence="5">
    <location>
        <position position="264"/>
    </location>
</feature>
<feature type="glycosylation site" description="N-linked (GlcNAc...) asparagine" evidence="5">
    <location>
        <position position="331"/>
    </location>
</feature>
<feature type="disulfide bond" evidence="2">
    <location>
        <begin position="31"/>
        <end position="126"/>
    </location>
</feature>
<feature type="disulfide bond" evidence="6">
    <location>
        <begin position="53"/>
        <end position="118"/>
    </location>
</feature>
<feature type="disulfide bond" evidence="2">
    <location>
        <begin position="143"/>
        <end position="185"/>
    </location>
</feature>
<feature type="disulfide bond" evidence="6">
    <location>
        <begin position="164"/>
        <end position="216"/>
    </location>
</feature>
<feature type="disulfide bond" evidence="6">
    <location>
        <begin position="267"/>
        <end position="334"/>
    </location>
</feature>
<keyword id="KW-1003">Cell membrane</keyword>
<keyword id="KW-0966">Cell projection</keyword>
<keyword id="KW-0963">Cytoplasm</keyword>
<keyword id="KW-1015">Disulfide bond</keyword>
<keyword id="KW-0325">Glycoprotein</keyword>
<keyword id="KW-0378">Hydrolase</keyword>
<keyword id="KW-0393">Immunoglobulin domain</keyword>
<keyword id="KW-0472">Membrane</keyword>
<keyword id="KW-0520">NAD</keyword>
<keyword id="KW-0675">Receptor</keyword>
<keyword id="KW-1185">Reference proteome</keyword>
<keyword id="KW-0677">Repeat</keyword>
<keyword id="KW-0732">Signal</keyword>
<keyword id="KW-0812">Transmembrane</keyword>
<keyword id="KW-1133">Transmembrane helix</keyword>
<protein>
    <recommendedName>
        <fullName>Interleukin-1 receptor accessory protein-like 1</fullName>
        <shortName>IL-1-RAPL-1</shortName>
        <shortName>IL-1RAPL-1</shortName>
        <shortName>IL1RAPL-1</shortName>
        <ecNumber evidence="7">3.2.2.6</ecNumber>
    </recommendedName>
    <alternativeName>
        <fullName>Oligophrenin-4</fullName>
    </alternativeName>
    <alternativeName>
        <fullName>X-linked interleukin-1 receptor accessory protein-like 1</fullName>
    </alternativeName>
</protein>
<organism>
    <name type="scientific">Pan troglodytes</name>
    <name type="common">Chimpanzee</name>
    <dbReference type="NCBI Taxonomy" id="9598"/>
    <lineage>
        <taxon>Eukaryota</taxon>
        <taxon>Metazoa</taxon>
        <taxon>Chordata</taxon>
        <taxon>Craniata</taxon>
        <taxon>Vertebrata</taxon>
        <taxon>Euteleostomi</taxon>
        <taxon>Mammalia</taxon>
        <taxon>Eutheria</taxon>
        <taxon>Euarchontoglires</taxon>
        <taxon>Primates</taxon>
        <taxon>Haplorrhini</taxon>
        <taxon>Catarrhini</taxon>
        <taxon>Hominidae</taxon>
        <taxon>Pan</taxon>
    </lineage>
</organism>
<evidence type="ECO:0000250" key="1"/>
<evidence type="ECO:0000250" key="2">
    <source>
        <dbReference type="UniProtKB" id="P59823"/>
    </source>
</evidence>
<evidence type="ECO:0000250" key="3">
    <source>
        <dbReference type="UniProtKB" id="P59824"/>
    </source>
</evidence>
<evidence type="ECO:0000250" key="4">
    <source>
        <dbReference type="UniProtKB" id="Q9NZN1"/>
    </source>
</evidence>
<evidence type="ECO:0000255" key="5"/>
<evidence type="ECO:0000255" key="6">
    <source>
        <dbReference type="PROSITE-ProRule" id="PRU00114"/>
    </source>
</evidence>
<evidence type="ECO:0000255" key="7">
    <source>
        <dbReference type="PROSITE-ProRule" id="PRU00204"/>
    </source>
</evidence>
<evidence type="ECO:0000256" key="8">
    <source>
        <dbReference type="SAM" id="MobiDB-lite"/>
    </source>
</evidence>
<evidence type="ECO:0000305" key="9"/>
<reference key="1">
    <citation type="journal article" date="2003" name="Mol. Biol. Evol.">
        <title>Gene diversity patterns at 10 X-chromosomal loci in humans and chimpanzees.</title>
        <authorList>
            <person name="Kitano T."/>
            <person name="Schwarz C."/>
            <person name="Nickel B."/>
            <person name="Paeaebo S."/>
        </authorList>
    </citation>
    <scope>NUCLEOTIDE SEQUENCE [MRNA]</scope>
</reference>
<accession>P60029</accession>